<gene>
    <name type="primary">AFT2</name>
    <name type="ordered locus">CAALFM_C207170CA</name>
    <name type="ORF">CaO19.2272</name>
    <name type="ORF">CaO19.9812</name>
</gene>
<reference key="1">
    <citation type="journal article" date="2004" name="Proc. Natl. Acad. Sci. U.S.A.">
        <title>The diploid genome sequence of Candida albicans.</title>
        <authorList>
            <person name="Jones T."/>
            <person name="Federspiel N.A."/>
            <person name="Chibana H."/>
            <person name="Dungan J."/>
            <person name="Kalman S."/>
            <person name="Magee B.B."/>
            <person name="Newport G."/>
            <person name="Thorstenson Y.R."/>
            <person name="Agabian N."/>
            <person name="Magee P.T."/>
            <person name="Davis R.W."/>
            <person name="Scherer S."/>
        </authorList>
    </citation>
    <scope>NUCLEOTIDE SEQUENCE [LARGE SCALE GENOMIC DNA]</scope>
    <source>
        <strain>SC5314 / ATCC MYA-2876</strain>
    </source>
</reference>
<reference key="2">
    <citation type="journal article" date="2007" name="Genome Biol.">
        <title>Assembly of the Candida albicans genome into sixteen supercontigs aligned on the eight chromosomes.</title>
        <authorList>
            <person name="van het Hoog M."/>
            <person name="Rast T.J."/>
            <person name="Martchenko M."/>
            <person name="Grindle S."/>
            <person name="Dignard D."/>
            <person name="Hogues H."/>
            <person name="Cuomo C."/>
            <person name="Berriman M."/>
            <person name="Scherer S."/>
            <person name="Magee B.B."/>
            <person name="Whiteway M."/>
            <person name="Chibana H."/>
            <person name="Nantel A."/>
            <person name="Magee P.T."/>
        </authorList>
    </citation>
    <scope>GENOME REANNOTATION</scope>
    <source>
        <strain>SC5314 / ATCC MYA-2876</strain>
    </source>
</reference>
<reference key="3">
    <citation type="journal article" date="2013" name="Genome Biol.">
        <title>Assembly of a phased diploid Candida albicans genome facilitates allele-specific measurements and provides a simple model for repeat and indel structure.</title>
        <authorList>
            <person name="Muzzey D."/>
            <person name="Schwartz K."/>
            <person name="Weissman J.S."/>
            <person name="Sherlock G."/>
        </authorList>
    </citation>
    <scope>NUCLEOTIDE SEQUENCE [LARGE SCALE GENOMIC DNA]</scope>
    <scope>GENOME REANNOTATION</scope>
    <source>
        <strain>SC5314 / ATCC MYA-2876</strain>
    </source>
</reference>
<reference key="4">
    <citation type="journal article" date="2010" name="Microbiology">
        <title>Role of Candida albicans Aft2p transcription factor in ferric reductase activity, morphogenesis and virulence.</title>
        <authorList>
            <person name="Liang Y."/>
            <person name="Wei D."/>
            <person name="Wang H."/>
            <person name="Xu N."/>
            <person name="Zhang B."/>
            <person name="Xing L."/>
            <person name="Li M."/>
        </authorList>
    </citation>
    <scope>FUNCTION</scope>
</reference>
<reference key="5">
    <citation type="journal article" date="2013" name="PLoS ONE">
        <title>Aft2, a novel transcription regulator, is required for iron metabolism, oxidative stress, surface adhesion and hyphal development in Candida albicans.</title>
        <authorList>
            <person name="Xu N."/>
            <person name="Cheng X."/>
            <person name="Yu Q."/>
            <person name="Qian K."/>
            <person name="Ding X."/>
            <person name="Liu R."/>
            <person name="Zhang B."/>
            <person name="Xing L."/>
            <person name="Li M."/>
        </authorList>
    </citation>
    <scope>FUNCTION</scope>
    <scope>DISRUPTION PHENOTYPE</scope>
</reference>
<protein>
    <recommendedName>
        <fullName>Iron-regulated transcriptional activator AFT2</fullName>
    </recommendedName>
    <alternativeName>
        <fullName>Activator of iron transcription protein 2</fullName>
    </alternativeName>
</protein>
<feature type="chain" id="PRO_0000422795" description="Iron-regulated transcriptional activator AFT2">
    <location>
        <begin position="1"/>
        <end position="798"/>
    </location>
</feature>
<feature type="region of interest" description="Disordered" evidence="1">
    <location>
        <begin position="142"/>
        <end position="274"/>
    </location>
</feature>
<feature type="region of interest" description="Disordered" evidence="1">
    <location>
        <begin position="331"/>
        <end position="365"/>
    </location>
</feature>
<feature type="region of interest" description="Disordered" evidence="1">
    <location>
        <begin position="449"/>
        <end position="545"/>
    </location>
</feature>
<feature type="region of interest" description="Disordered" evidence="1">
    <location>
        <begin position="642"/>
        <end position="718"/>
    </location>
</feature>
<feature type="region of interest" description="Disordered" evidence="1">
    <location>
        <begin position="748"/>
        <end position="798"/>
    </location>
</feature>
<feature type="compositionally biased region" description="Polar residues" evidence="1">
    <location>
        <begin position="153"/>
        <end position="165"/>
    </location>
</feature>
<feature type="compositionally biased region" description="Low complexity" evidence="1">
    <location>
        <begin position="193"/>
        <end position="223"/>
    </location>
</feature>
<feature type="compositionally biased region" description="Basic residues" evidence="1">
    <location>
        <begin position="256"/>
        <end position="274"/>
    </location>
</feature>
<feature type="compositionally biased region" description="Polar residues" evidence="1">
    <location>
        <begin position="449"/>
        <end position="460"/>
    </location>
</feature>
<feature type="compositionally biased region" description="Low complexity" evidence="1">
    <location>
        <begin position="476"/>
        <end position="517"/>
    </location>
</feature>
<feature type="compositionally biased region" description="Polar residues" evidence="1">
    <location>
        <begin position="518"/>
        <end position="543"/>
    </location>
</feature>
<feature type="compositionally biased region" description="Polar residues" evidence="1">
    <location>
        <begin position="646"/>
        <end position="656"/>
    </location>
</feature>
<feature type="compositionally biased region" description="Low complexity" evidence="1">
    <location>
        <begin position="657"/>
        <end position="695"/>
    </location>
</feature>
<feature type="compositionally biased region" description="Low complexity" evidence="1">
    <location>
        <begin position="705"/>
        <end position="718"/>
    </location>
</feature>
<feature type="compositionally biased region" description="Polar residues" evidence="1">
    <location>
        <begin position="748"/>
        <end position="773"/>
    </location>
</feature>
<feature type="compositionally biased region" description="Low complexity" evidence="1">
    <location>
        <begin position="774"/>
        <end position="789"/>
    </location>
</feature>
<sequence length="798" mass="88031">MTDRVTHRVSLDDLNLEKQKFDSKDDIKPWLQDNLQSTKGINVVIERSDTSKIIFKCKNKEKKTKIVESKKTASKTMIRKHTSCPFKIRANYSVRNKVWTLSIVSDEHDHVVDLPRSFVGKNLISNTIPGSSLNVLDSVAPRSNKKGIKPTSEIANTPSVTSYSPSCAVKRNEDVDAPKISSKKARNLTKKPSTQSTRSSSSSDGSSIVSFGSLTSQSSSTSLPENYKGQVPTSMDSMVVEESLTGKSLKPAASHPVKRKNMKANTMKKSKKLKQNPIVVSPIEEDSNLNSFDDANIDLQRQQSLQSPLSHLVQNQDPISLEQNPQLHTVYPQPRHSKQSSSLLKKNQQQDRIPDNMPLQPQENNRTLQNFPLNQFNANEILQNVQQVVRETVKSEILDSPNIDNTYKTDMMDSFVSSVILDYKDYLSSQFLFSLKQNLYDRREATHTNVDLEQNGSNENLFDEQPQHKHNHQHNENQFSYQSQIQNQRQNQNQNQGQNQNQNQSQSQTPGQNSNQNDSQTQIPLQSQTPQDRKSAMQQNWLPGSTPGVGGLIRLSPLLNDNDNNEYAAVAAAAVVGSTPGNPNGNSLENFTHLPGINSSTLNYLMQLPHPSANPNSGGVSSSQPASLMSLQGHQGLLQQQQQQQPMFSMQNSGQQLPPLSSIPKLPSSNNANVNLNSSSTLPLPLNNTGPTLNPSSLLKSTSRNSTNSGNINVNNINNSNNNSNSAFNSVFLNSSITTNPAFIFNSQGNPTNSNQSMVNSIMTTNSNKDGTATSNNNSSGNTSNNLLNDMPNYGPGW</sequence>
<evidence type="ECO:0000256" key="1">
    <source>
        <dbReference type="SAM" id="MobiDB-lite"/>
    </source>
</evidence>
<evidence type="ECO:0000269" key="2">
    <source>
    </source>
</evidence>
<evidence type="ECO:0000269" key="3">
    <source>
    </source>
</evidence>
<evidence type="ECO:0000305" key="4"/>
<name>AFT2_CANAL</name>
<accession>Q59Z29</accession>
<accession>A0A1D8PHY4</accession>
<comment type="function">
    <text evidence="2 3">Transcription factor involved in iron metabolism, oxidative stress, surface adhesion, hyphal development and virulence. Functions as a negative regulator of MRS4 expression through the CACCC AFT-type sequence in a gene dose-dependent fashion. Acts as a repressor in flocculation, plastic adhesion, and surface hydrophobicity.</text>
</comment>
<comment type="subcellular location">
    <subcellularLocation>
        <location evidence="4">Nucleus</location>
    </subcellularLocation>
</comment>
<comment type="disruption phenotype">
    <text evidence="3">Leads to hypersensitivity to oxidative stress.</text>
</comment>
<dbReference type="EMBL" id="CP017624">
    <property type="protein sequence ID" value="AOW27715.1"/>
    <property type="molecule type" value="Genomic_DNA"/>
</dbReference>
<dbReference type="RefSeq" id="XP_714862.2">
    <property type="nucleotide sequence ID" value="XM_709769.2"/>
</dbReference>
<dbReference type="SMR" id="Q59Z29"/>
<dbReference type="BioGRID" id="1226605">
    <property type="interactions" value="2"/>
</dbReference>
<dbReference type="STRING" id="237561.Q59Z29"/>
<dbReference type="EnsemblFungi" id="C2_07170C_A-T">
    <property type="protein sequence ID" value="C2_07170C_A-T-p1"/>
    <property type="gene ID" value="C2_07170C_A"/>
</dbReference>
<dbReference type="GeneID" id="3643511"/>
<dbReference type="KEGG" id="cal:CAALFM_C207170CA"/>
<dbReference type="CGD" id="CAL0000183427">
    <property type="gene designation" value="AFT2"/>
</dbReference>
<dbReference type="VEuPathDB" id="FungiDB:C2_07170C_A"/>
<dbReference type="eggNOG" id="KOG4818">
    <property type="taxonomic scope" value="Eukaryota"/>
</dbReference>
<dbReference type="HOGENOM" id="CLU_363283_0_0_1"/>
<dbReference type="InParanoid" id="Q59Z29"/>
<dbReference type="OrthoDB" id="4068596at2759"/>
<dbReference type="PHI-base" id="PHI:2555"/>
<dbReference type="PRO" id="PR:Q59Z29"/>
<dbReference type="Proteomes" id="UP000000559">
    <property type="component" value="Chromosome 2"/>
</dbReference>
<dbReference type="GO" id="GO:0005634">
    <property type="term" value="C:nucleus"/>
    <property type="evidence" value="ECO:0000314"/>
    <property type="project" value="CGD"/>
</dbReference>
<dbReference type="GO" id="GO:0000981">
    <property type="term" value="F:DNA-binding transcription factor activity, RNA polymerase II-specific"/>
    <property type="evidence" value="ECO:0007669"/>
    <property type="project" value="InterPro"/>
</dbReference>
<dbReference type="GO" id="GO:0007155">
    <property type="term" value="P:cell adhesion"/>
    <property type="evidence" value="ECO:0000315"/>
    <property type="project" value="CGD"/>
</dbReference>
<dbReference type="GO" id="GO:0010106">
    <property type="term" value="P:cellular response to iron ion starvation"/>
    <property type="evidence" value="ECO:0007669"/>
    <property type="project" value="InterPro"/>
</dbReference>
<dbReference type="GO" id="GO:0034599">
    <property type="term" value="P:cellular response to oxidative stress"/>
    <property type="evidence" value="ECO:0000315"/>
    <property type="project" value="CGD"/>
</dbReference>
<dbReference type="GO" id="GO:0009267">
    <property type="term" value="P:cellular response to starvation"/>
    <property type="evidence" value="ECO:0000315"/>
    <property type="project" value="CGD"/>
</dbReference>
<dbReference type="GO" id="GO:0030447">
    <property type="term" value="P:filamentous growth"/>
    <property type="evidence" value="ECO:0000315"/>
    <property type="project" value="CGD"/>
</dbReference>
<dbReference type="GO" id="GO:0036180">
    <property type="term" value="P:filamentous growth of a population of unicellular organisms in response to biotic stimulus"/>
    <property type="evidence" value="ECO:0000315"/>
    <property type="project" value="CGD"/>
</dbReference>
<dbReference type="GO" id="GO:0036170">
    <property type="term" value="P:filamentous growth of a population of unicellular organisms in response to starvation"/>
    <property type="evidence" value="ECO:0000315"/>
    <property type="project" value="CGD"/>
</dbReference>
<dbReference type="GO" id="GO:0006879">
    <property type="term" value="P:intracellular iron ion homeostasis"/>
    <property type="evidence" value="ECO:0000315"/>
    <property type="project" value="CGD"/>
</dbReference>
<dbReference type="GO" id="GO:0036267">
    <property type="term" value="P:invasive filamentous growth"/>
    <property type="evidence" value="ECO:0000315"/>
    <property type="project" value="CGD"/>
</dbReference>
<dbReference type="GO" id="GO:1900445">
    <property type="term" value="P:positive regulation of filamentous growth of a population of unicellular organisms in response to biotic stimulus"/>
    <property type="evidence" value="ECO:0000315"/>
    <property type="project" value="CGD"/>
</dbReference>
<dbReference type="GO" id="GO:1900436">
    <property type="term" value="P:positive regulation of filamentous growth of a population of unicellular organisms in response to starvation"/>
    <property type="evidence" value="ECO:0000315"/>
    <property type="project" value="CGD"/>
</dbReference>
<dbReference type="GO" id="GO:0045944">
    <property type="term" value="P:positive regulation of transcription by RNA polymerase II"/>
    <property type="evidence" value="ECO:0000315"/>
    <property type="project" value="CGD"/>
</dbReference>
<dbReference type="GO" id="GO:0006355">
    <property type="term" value="P:regulation of DNA-templated transcription"/>
    <property type="evidence" value="ECO:0000250"/>
    <property type="project" value="CGD"/>
</dbReference>
<dbReference type="InterPro" id="IPR014842">
    <property type="entry name" value="AFT"/>
</dbReference>
<dbReference type="Pfam" id="PF08731">
    <property type="entry name" value="AFT"/>
    <property type="match status" value="1"/>
</dbReference>
<organism>
    <name type="scientific">Candida albicans (strain SC5314 / ATCC MYA-2876)</name>
    <name type="common">Yeast</name>
    <dbReference type="NCBI Taxonomy" id="237561"/>
    <lineage>
        <taxon>Eukaryota</taxon>
        <taxon>Fungi</taxon>
        <taxon>Dikarya</taxon>
        <taxon>Ascomycota</taxon>
        <taxon>Saccharomycotina</taxon>
        <taxon>Pichiomycetes</taxon>
        <taxon>Debaryomycetaceae</taxon>
        <taxon>Candida/Lodderomyces clade</taxon>
        <taxon>Candida</taxon>
    </lineage>
</organism>
<keyword id="KW-0130">Cell adhesion</keyword>
<keyword id="KW-0408">Iron</keyword>
<keyword id="KW-0539">Nucleus</keyword>
<keyword id="KW-1185">Reference proteome</keyword>
<keyword id="KW-0804">Transcription</keyword>
<keyword id="KW-0805">Transcription regulation</keyword>
<keyword id="KW-0843">Virulence</keyword>
<proteinExistence type="predicted"/>